<name>YKFM_ECOLI</name>
<accession>A5A605</accession>
<accession>P71282</accession>
<protein>
    <recommendedName>
        <fullName>Uncharacterized protein YkfM</fullName>
    </recommendedName>
</protein>
<proteinExistence type="predicted"/>
<dbReference type="EMBL" id="U70214">
    <property type="protein sequence ID" value="AAB08639.1"/>
    <property type="molecule type" value="Genomic_DNA"/>
</dbReference>
<dbReference type="EMBL" id="U00096">
    <property type="protein sequence ID" value="ABP93434.1"/>
    <property type="molecule type" value="Genomic_DNA"/>
</dbReference>
<dbReference type="RefSeq" id="WP_001236645.1">
    <property type="nucleotide sequence ID" value="NZ_LN832404.1"/>
</dbReference>
<dbReference type="RefSeq" id="YP_001165307.1">
    <property type="nucleotide sequence ID" value="NC_000913.3"/>
</dbReference>
<dbReference type="FunCoup" id="A5A605">
    <property type="interactions" value="1"/>
</dbReference>
<dbReference type="STRING" id="511145.b4586"/>
<dbReference type="PaxDb" id="511145-b4586"/>
<dbReference type="EnsemblBacteria" id="ABP93434">
    <property type="protein sequence ID" value="ABP93434"/>
    <property type="gene ID" value="b4586"/>
</dbReference>
<dbReference type="GeneID" id="5061498"/>
<dbReference type="KEGG" id="eco:b4586"/>
<dbReference type="KEGG" id="ecoc:C3026_01020"/>
<dbReference type="PATRIC" id="fig|83333.103.peg.967"/>
<dbReference type="eggNOG" id="ENOG5031M8I">
    <property type="taxonomic scope" value="Bacteria"/>
</dbReference>
<dbReference type="InParanoid" id="A5A605"/>
<dbReference type="OMA" id="GCVNANY"/>
<dbReference type="OrthoDB" id="9907086at2"/>
<dbReference type="BioCyc" id="EcoCyc:MONOMER0-2812"/>
<dbReference type="PRO" id="PR:A5A605"/>
<dbReference type="Proteomes" id="UP000000625">
    <property type="component" value="Chromosome"/>
</dbReference>
<dbReference type="GO" id="GO:0016020">
    <property type="term" value="C:membrane"/>
    <property type="evidence" value="ECO:0007669"/>
    <property type="project" value="UniProtKB-SubCell"/>
</dbReference>
<dbReference type="GO" id="GO:0006974">
    <property type="term" value="P:DNA damage response"/>
    <property type="evidence" value="ECO:0000315"/>
    <property type="project" value="EcoCyc"/>
</dbReference>
<dbReference type="GO" id="GO:0046677">
    <property type="term" value="P:response to antibiotic"/>
    <property type="evidence" value="ECO:0000315"/>
    <property type="project" value="EcoCyc"/>
</dbReference>
<evidence type="ECO:0000255" key="1"/>
<evidence type="ECO:0000305" key="2"/>
<comment type="subcellular location">
    <subcellularLocation>
        <location evidence="2">Membrane</location>
        <topology evidence="2">Multi-pass membrane protein</topology>
    </subcellularLocation>
</comment>
<feature type="chain" id="PRO_0000311774" description="Uncharacterized protein YkfM">
    <location>
        <begin position="1"/>
        <end position="159"/>
    </location>
</feature>
<feature type="transmembrane region" description="Helical" evidence="1">
    <location>
        <begin position="10"/>
        <end position="30"/>
    </location>
</feature>
<feature type="transmembrane region" description="Helical" evidence="1">
    <location>
        <begin position="52"/>
        <end position="72"/>
    </location>
</feature>
<feature type="transmembrane region" description="Helical" evidence="1">
    <location>
        <begin position="96"/>
        <end position="116"/>
    </location>
</feature>
<sequence>MRLHVKLKEFLSMFFMAILFFPAFNASLFFTGVKPLYSIIKCSTEIFYDWRMLILCFGFMSFSFLNIHVILLTIIKSFLIKKTKVVNFATDITIQLTLIFLLIAIVIAPLIAPFVTGYVNTNYHPCGNNTGIFPGAIYIKNGMKCNNGYISRKEDSAVK</sequence>
<keyword id="KW-0472">Membrane</keyword>
<keyword id="KW-1185">Reference proteome</keyword>
<keyword id="KW-0812">Transmembrane</keyword>
<keyword id="KW-1133">Transmembrane helix</keyword>
<organism>
    <name type="scientific">Escherichia coli (strain K12)</name>
    <dbReference type="NCBI Taxonomy" id="83333"/>
    <lineage>
        <taxon>Bacteria</taxon>
        <taxon>Pseudomonadati</taxon>
        <taxon>Pseudomonadota</taxon>
        <taxon>Gammaproteobacteria</taxon>
        <taxon>Enterobacterales</taxon>
        <taxon>Enterobacteriaceae</taxon>
        <taxon>Escherichia</taxon>
    </lineage>
</organism>
<gene>
    <name type="primary">ykfM</name>
    <name type="ordered locus">b4586</name>
</gene>
<reference key="1">
    <citation type="submission" date="1996-09" db="EMBL/GenBank/DDBJ databases">
        <title>Sequence of minutes 4-25 of Escherichia coli.</title>
        <authorList>
            <person name="Schramm S."/>
            <person name="Duncan M."/>
            <person name="Allen E."/>
            <person name="Araujo R."/>
            <person name="Aparicio A."/>
            <person name="Chung E."/>
            <person name="Davis K."/>
            <person name="Federspiel N."/>
            <person name="Hyman R."/>
            <person name="Kalman S."/>
            <person name="Komp C."/>
            <person name="Kurdi O."/>
            <person name="Lashkari D."/>
            <person name="Lew H."/>
            <person name="Lin D."/>
            <person name="Namath A."/>
            <person name="Oefner P."/>
            <person name="Roberts D."/>
            <person name="Davis R.W."/>
        </authorList>
    </citation>
    <scope>NUCLEOTIDE SEQUENCE [LARGE SCALE GENOMIC DNA]</scope>
    <source>
        <strain>K12 / MG1655 / ATCC 47076</strain>
    </source>
</reference>
<reference key="2">
    <citation type="journal article" date="1997" name="Science">
        <title>The complete genome sequence of Escherichia coli K-12.</title>
        <authorList>
            <person name="Blattner F.R."/>
            <person name="Plunkett G. III"/>
            <person name="Bloch C.A."/>
            <person name="Perna N.T."/>
            <person name="Burland V."/>
            <person name="Riley M."/>
            <person name="Collado-Vides J."/>
            <person name="Glasner J.D."/>
            <person name="Rode C.K."/>
            <person name="Mayhew G.F."/>
            <person name="Gregor J."/>
            <person name="Davis N.W."/>
            <person name="Kirkpatrick H.A."/>
            <person name="Goeden M.A."/>
            <person name="Rose D.J."/>
            <person name="Mau B."/>
            <person name="Shao Y."/>
        </authorList>
    </citation>
    <scope>NUCLEOTIDE SEQUENCE [LARGE SCALE GENOMIC DNA]</scope>
    <source>
        <strain>K12 / MG1655 / ATCC 47076</strain>
    </source>
</reference>